<sequence length="285" mass="30557">MAQSRLFFSADKAEAERTYNILEQAFEDDGFPIAITEIDEDRQIFEVSVYVEDDAEEVAARVDALVGPGLFDTEELPDIDWVTHSLEGLKPVRAGHFFVHGSHDRDKIEPGDIAIEIDAGLAFGTGHHGTTAGCLELIEETVETEHPTNALDLGTGSAVLAIAIARLAPIPILATDIDPIAVTVAAENAAKNGVAEHIVTATAEGFGHPIFRSYSPFDLIVANILANPLIELAPSIKEHLAPGGSIILSGILDSQHDAVLAAYQTQGLTHQKTLHREGWVAIHLT</sequence>
<organism>
    <name type="scientific">Brucella abortus (strain 2308)</name>
    <dbReference type="NCBI Taxonomy" id="359391"/>
    <lineage>
        <taxon>Bacteria</taxon>
        <taxon>Pseudomonadati</taxon>
        <taxon>Pseudomonadota</taxon>
        <taxon>Alphaproteobacteria</taxon>
        <taxon>Hyphomicrobiales</taxon>
        <taxon>Brucellaceae</taxon>
        <taxon>Brucella/Ochrobactrum group</taxon>
        <taxon>Brucella</taxon>
    </lineage>
</organism>
<reference key="1">
    <citation type="journal article" date="2005" name="Infect. Immun.">
        <title>Whole-genome analyses of speciation events in pathogenic Brucellae.</title>
        <authorList>
            <person name="Chain P.S."/>
            <person name="Comerci D.J."/>
            <person name="Tolmasky M.E."/>
            <person name="Larimer F.W."/>
            <person name="Malfatti S.A."/>
            <person name="Vergez L.M."/>
            <person name="Aguero F."/>
            <person name="Land M.L."/>
            <person name="Ugalde R.A."/>
            <person name="Garcia E."/>
        </authorList>
    </citation>
    <scope>NUCLEOTIDE SEQUENCE [LARGE SCALE GENOMIC DNA]</scope>
    <source>
        <strain>2308</strain>
    </source>
</reference>
<gene>
    <name evidence="1" type="primary">prmA</name>
    <name type="ordered locus">BAB1_1436</name>
</gene>
<accession>Q2YPS7</accession>
<feature type="chain" id="PRO_1000045988" description="Ribosomal protein L11 methyltransferase">
    <location>
        <begin position="1"/>
        <end position="285"/>
    </location>
</feature>
<feature type="binding site" evidence="1">
    <location>
        <position position="131"/>
    </location>
    <ligand>
        <name>S-adenosyl-L-methionine</name>
        <dbReference type="ChEBI" id="CHEBI:59789"/>
    </ligand>
</feature>
<feature type="binding site" evidence="1">
    <location>
        <position position="154"/>
    </location>
    <ligand>
        <name>S-adenosyl-L-methionine</name>
        <dbReference type="ChEBI" id="CHEBI:59789"/>
    </ligand>
</feature>
<feature type="binding site" evidence="1">
    <location>
        <position position="176"/>
    </location>
    <ligand>
        <name>S-adenosyl-L-methionine</name>
        <dbReference type="ChEBI" id="CHEBI:59789"/>
    </ligand>
</feature>
<feature type="binding site" evidence="1">
    <location>
        <position position="223"/>
    </location>
    <ligand>
        <name>S-adenosyl-L-methionine</name>
        <dbReference type="ChEBI" id="CHEBI:59789"/>
    </ligand>
</feature>
<protein>
    <recommendedName>
        <fullName evidence="1">Ribosomal protein L11 methyltransferase</fullName>
        <shortName evidence="1">L11 Mtase</shortName>
        <ecNumber evidence="1">2.1.1.-</ecNumber>
    </recommendedName>
</protein>
<dbReference type="EC" id="2.1.1.-" evidence="1"/>
<dbReference type="EMBL" id="AM040264">
    <property type="protein sequence ID" value="CAJ11392.1"/>
    <property type="molecule type" value="Genomic_DNA"/>
</dbReference>
<dbReference type="RefSeq" id="WP_002966890.1">
    <property type="nucleotide sequence ID" value="NZ_KN046823.1"/>
</dbReference>
<dbReference type="SMR" id="Q2YPS7"/>
<dbReference type="STRING" id="359391.BAB1_1436"/>
<dbReference type="KEGG" id="bmf:BAB1_1436"/>
<dbReference type="PATRIC" id="fig|359391.11.peg.887"/>
<dbReference type="HOGENOM" id="CLU_049382_3_0_5"/>
<dbReference type="PhylomeDB" id="Q2YPS7"/>
<dbReference type="Proteomes" id="UP000002719">
    <property type="component" value="Chromosome I"/>
</dbReference>
<dbReference type="GO" id="GO:0005737">
    <property type="term" value="C:cytoplasm"/>
    <property type="evidence" value="ECO:0007669"/>
    <property type="project" value="UniProtKB-SubCell"/>
</dbReference>
<dbReference type="GO" id="GO:0016279">
    <property type="term" value="F:protein-lysine N-methyltransferase activity"/>
    <property type="evidence" value="ECO:0007669"/>
    <property type="project" value="RHEA"/>
</dbReference>
<dbReference type="GO" id="GO:0032259">
    <property type="term" value="P:methylation"/>
    <property type="evidence" value="ECO:0007669"/>
    <property type="project" value="UniProtKB-KW"/>
</dbReference>
<dbReference type="CDD" id="cd02440">
    <property type="entry name" value="AdoMet_MTases"/>
    <property type="match status" value="1"/>
</dbReference>
<dbReference type="Gene3D" id="3.40.50.150">
    <property type="entry name" value="Vaccinia Virus protein VP39"/>
    <property type="match status" value="1"/>
</dbReference>
<dbReference type="HAMAP" id="MF_00735">
    <property type="entry name" value="Methyltr_PrmA"/>
    <property type="match status" value="1"/>
</dbReference>
<dbReference type="InterPro" id="IPR050078">
    <property type="entry name" value="Ribosomal_L11_MeTrfase_PrmA"/>
</dbReference>
<dbReference type="InterPro" id="IPR004498">
    <property type="entry name" value="Ribosomal_PrmA_MeTrfase"/>
</dbReference>
<dbReference type="InterPro" id="IPR029063">
    <property type="entry name" value="SAM-dependent_MTases_sf"/>
</dbReference>
<dbReference type="NCBIfam" id="NF001784">
    <property type="entry name" value="PRK00517.2-1"/>
    <property type="match status" value="1"/>
</dbReference>
<dbReference type="PANTHER" id="PTHR43648">
    <property type="entry name" value="ELECTRON TRANSFER FLAVOPROTEIN BETA SUBUNIT LYSINE METHYLTRANSFERASE"/>
    <property type="match status" value="1"/>
</dbReference>
<dbReference type="PANTHER" id="PTHR43648:SF1">
    <property type="entry name" value="ELECTRON TRANSFER FLAVOPROTEIN BETA SUBUNIT LYSINE METHYLTRANSFERASE"/>
    <property type="match status" value="1"/>
</dbReference>
<dbReference type="Pfam" id="PF06325">
    <property type="entry name" value="PrmA"/>
    <property type="match status" value="1"/>
</dbReference>
<dbReference type="PIRSF" id="PIRSF000401">
    <property type="entry name" value="RPL11_MTase"/>
    <property type="match status" value="1"/>
</dbReference>
<dbReference type="SUPFAM" id="SSF53335">
    <property type="entry name" value="S-adenosyl-L-methionine-dependent methyltransferases"/>
    <property type="match status" value="1"/>
</dbReference>
<evidence type="ECO:0000255" key="1">
    <source>
        <dbReference type="HAMAP-Rule" id="MF_00735"/>
    </source>
</evidence>
<name>PRMA_BRUA2</name>
<proteinExistence type="inferred from homology"/>
<keyword id="KW-0963">Cytoplasm</keyword>
<keyword id="KW-0489">Methyltransferase</keyword>
<keyword id="KW-1185">Reference proteome</keyword>
<keyword id="KW-0949">S-adenosyl-L-methionine</keyword>
<keyword id="KW-0808">Transferase</keyword>
<comment type="function">
    <text evidence="1">Methylates ribosomal protein L11.</text>
</comment>
<comment type="catalytic activity">
    <reaction evidence="1">
        <text>L-lysyl-[protein] + 3 S-adenosyl-L-methionine = N(6),N(6),N(6)-trimethyl-L-lysyl-[protein] + 3 S-adenosyl-L-homocysteine + 3 H(+)</text>
        <dbReference type="Rhea" id="RHEA:54192"/>
        <dbReference type="Rhea" id="RHEA-COMP:9752"/>
        <dbReference type="Rhea" id="RHEA-COMP:13826"/>
        <dbReference type="ChEBI" id="CHEBI:15378"/>
        <dbReference type="ChEBI" id="CHEBI:29969"/>
        <dbReference type="ChEBI" id="CHEBI:57856"/>
        <dbReference type="ChEBI" id="CHEBI:59789"/>
        <dbReference type="ChEBI" id="CHEBI:61961"/>
    </reaction>
</comment>
<comment type="subcellular location">
    <subcellularLocation>
        <location evidence="1">Cytoplasm</location>
    </subcellularLocation>
</comment>
<comment type="similarity">
    <text evidence="1">Belongs to the methyltransferase superfamily. PrmA family.</text>
</comment>